<feature type="chain" id="PRO_0000178636" description="Methylglyoxal synthase">
    <location>
        <begin position="1"/>
        <end position="134"/>
    </location>
</feature>
<feature type="domain" description="MGS-like" evidence="1">
    <location>
        <begin position="1"/>
        <end position="134"/>
    </location>
</feature>
<feature type="active site" description="Proton donor/acceptor" evidence="1">
    <location>
        <position position="60"/>
    </location>
</feature>
<feature type="binding site" evidence="1">
    <location>
        <position position="8"/>
    </location>
    <ligand>
        <name>substrate</name>
    </ligand>
</feature>
<feature type="binding site" evidence="1">
    <location>
        <position position="12"/>
    </location>
    <ligand>
        <name>substrate</name>
    </ligand>
</feature>
<feature type="binding site" evidence="1">
    <location>
        <begin position="34"/>
        <end position="37"/>
    </location>
    <ligand>
        <name>substrate</name>
    </ligand>
</feature>
<feature type="binding site" evidence="1">
    <location>
        <begin position="54"/>
        <end position="55"/>
    </location>
    <ligand>
        <name>substrate</name>
    </ligand>
</feature>
<feature type="binding site" evidence="1">
    <location>
        <position position="87"/>
    </location>
    <ligand>
        <name>substrate</name>
    </ligand>
</feature>
<accession>Q8Y5Z7</accession>
<protein>
    <recommendedName>
        <fullName evidence="1">Methylglyoxal synthase</fullName>
        <shortName evidence="1">MGS</shortName>
        <ecNumber evidence="1">4.2.3.3</ecNumber>
    </recommendedName>
</protein>
<name>MGSA_LISMO</name>
<reference key="1">
    <citation type="journal article" date="2001" name="Science">
        <title>Comparative genomics of Listeria species.</title>
        <authorList>
            <person name="Glaser P."/>
            <person name="Frangeul L."/>
            <person name="Buchrieser C."/>
            <person name="Rusniok C."/>
            <person name="Amend A."/>
            <person name="Baquero F."/>
            <person name="Berche P."/>
            <person name="Bloecker H."/>
            <person name="Brandt P."/>
            <person name="Chakraborty T."/>
            <person name="Charbit A."/>
            <person name="Chetouani F."/>
            <person name="Couve E."/>
            <person name="de Daruvar A."/>
            <person name="Dehoux P."/>
            <person name="Domann E."/>
            <person name="Dominguez-Bernal G."/>
            <person name="Duchaud E."/>
            <person name="Durant L."/>
            <person name="Dussurget O."/>
            <person name="Entian K.-D."/>
            <person name="Fsihi H."/>
            <person name="Garcia-del Portillo F."/>
            <person name="Garrido P."/>
            <person name="Gautier L."/>
            <person name="Goebel W."/>
            <person name="Gomez-Lopez N."/>
            <person name="Hain T."/>
            <person name="Hauf J."/>
            <person name="Jackson D."/>
            <person name="Jones L.-M."/>
            <person name="Kaerst U."/>
            <person name="Kreft J."/>
            <person name="Kuhn M."/>
            <person name="Kunst F."/>
            <person name="Kurapkat G."/>
            <person name="Madueno E."/>
            <person name="Maitournam A."/>
            <person name="Mata Vicente J."/>
            <person name="Ng E."/>
            <person name="Nedjari H."/>
            <person name="Nordsiek G."/>
            <person name="Novella S."/>
            <person name="de Pablos B."/>
            <person name="Perez-Diaz J.-C."/>
            <person name="Purcell R."/>
            <person name="Remmel B."/>
            <person name="Rose M."/>
            <person name="Schlueter T."/>
            <person name="Simoes N."/>
            <person name="Tierrez A."/>
            <person name="Vazquez-Boland J.-A."/>
            <person name="Voss H."/>
            <person name="Wehland J."/>
            <person name="Cossart P."/>
        </authorList>
    </citation>
    <scope>NUCLEOTIDE SEQUENCE [LARGE SCALE GENOMIC DNA]</scope>
    <source>
        <strain>ATCC BAA-679 / EGD-e</strain>
    </source>
</reference>
<gene>
    <name evidence="1" type="primary">mgsA</name>
    <name type="ordered locus">lmo1906</name>
</gene>
<dbReference type="EC" id="4.2.3.3" evidence="1"/>
<dbReference type="EMBL" id="AL591981">
    <property type="protein sequence ID" value="CAC99984.1"/>
    <property type="molecule type" value="Genomic_DNA"/>
</dbReference>
<dbReference type="PIR" id="AB1313">
    <property type="entry name" value="AB1313"/>
</dbReference>
<dbReference type="RefSeq" id="NP_465430.1">
    <property type="nucleotide sequence ID" value="NC_003210.1"/>
</dbReference>
<dbReference type="RefSeq" id="WP_003723016.1">
    <property type="nucleotide sequence ID" value="NZ_CP149495.1"/>
</dbReference>
<dbReference type="SMR" id="Q8Y5Z7"/>
<dbReference type="STRING" id="169963.gene:17594591"/>
<dbReference type="PaxDb" id="169963-lmo1906"/>
<dbReference type="EnsemblBacteria" id="CAC99984">
    <property type="protein sequence ID" value="CAC99984"/>
    <property type="gene ID" value="CAC99984"/>
</dbReference>
<dbReference type="GeneID" id="93239820"/>
<dbReference type="GeneID" id="985777"/>
<dbReference type="KEGG" id="lmo:lmo1906"/>
<dbReference type="PATRIC" id="fig|169963.11.peg.1952"/>
<dbReference type="eggNOG" id="COG1803">
    <property type="taxonomic scope" value="Bacteria"/>
</dbReference>
<dbReference type="HOGENOM" id="CLU_120420_1_0_9"/>
<dbReference type="OrthoDB" id="9787147at2"/>
<dbReference type="PhylomeDB" id="Q8Y5Z7"/>
<dbReference type="BioCyc" id="LMON169963:LMO1906-MONOMER"/>
<dbReference type="Proteomes" id="UP000000817">
    <property type="component" value="Chromosome"/>
</dbReference>
<dbReference type="GO" id="GO:0005829">
    <property type="term" value="C:cytosol"/>
    <property type="evidence" value="ECO:0000318"/>
    <property type="project" value="GO_Central"/>
</dbReference>
<dbReference type="GO" id="GO:0008929">
    <property type="term" value="F:methylglyoxal synthase activity"/>
    <property type="evidence" value="ECO:0000318"/>
    <property type="project" value="GO_Central"/>
</dbReference>
<dbReference type="GO" id="GO:0019242">
    <property type="term" value="P:methylglyoxal biosynthetic process"/>
    <property type="evidence" value="ECO:0000318"/>
    <property type="project" value="GO_Central"/>
</dbReference>
<dbReference type="CDD" id="cd01422">
    <property type="entry name" value="MGS"/>
    <property type="match status" value="1"/>
</dbReference>
<dbReference type="FunFam" id="3.40.50.1380:FF:000006">
    <property type="entry name" value="Methylglyoxal synthase"/>
    <property type="match status" value="1"/>
</dbReference>
<dbReference type="Gene3D" id="3.40.50.1380">
    <property type="entry name" value="Methylglyoxal synthase-like domain"/>
    <property type="match status" value="1"/>
</dbReference>
<dbReference type="HAMAP" id="MF_00549">
    <property type="entry name" value="Methylglyoxal_synth"/>
    <property type="match status" value="1"/>
</dbReference>
<dbReference type="InterPro" id="IPR004363">
    <property type="entry name" value="Methylgl_synth"/>
</dbReference>
<dbReference type="InterPro" id="IPR018148">
    <property type="entry name" value="Methylglyoxal_synth_AS"/>
</dbReference>
<dbReference type="InterPro" id="IPR011607">
    <property type="entry name" value="MGS-like_dom"/>
</dbReference>
<dbReference type="InterPro" id="IPR036914">
    <property type="entry name" value="MGS-like_dom_sf"/>
</dbReference>
<dbReference type="NCBIfam" id="TIGR00160">
    <property type="entry name" value="MGSA"/>
    <property type="match status" value="1"/>
</dbReference>
<dbReference type="NCBIfam" id="NF003559">
    <property type="entry name" value="PRK05234.1"/>
    <property type="match status" value="1"/>
</dbReference>
<dbReference type="PANTHER" id="PTHR30492">
    <property type="entry name" value="METHYLGLYOXAL SYNTHASE"/>
    <property type="match status" value="1"/>
</dbReference>
<dbReference type="PANTHER" id="PTHR30492:SF0">
    <property type="entry name" value="METHYLGLYOXAL SYNTHASE"/>
    <property type="match status" value="1"/>
</dbReference>
<dbReference type="Pfam" id="PF02142">
    <property type="entry name" value="MGS"/>
    <property type="match status" value="1"/>
</dbReference>
<dbReference type="PIRSF" id="PIRSF006614">
    <property type="entry name" value="Methylglyox_syn"/>
    <property type="match status" value="1"/>
</dbReference>
<dbReference type="SMART" id="SM00851">
    <property type="entry name" value="MGS"/>
    <property type="match status" value="1"/>
</dbReference>
<dbReference type="SUPFAM" id="SSF52335">
    <property type="entry name" value="Methylglyoxal synthase-like"/>
    <property type="match status" value="1"/>
</dbReference>
<dbReference type="PROSITE" id="PS01335">
    <property type="entry name" value="METHYLGLYOXAL_SYNTH"/>
    <property type="match status" value="1"/>
</dbReference>
<dbReference type="PROSITE" id="PS51855">
    <property type="entry name" value="MGS"/>
    <property type="match status" value="1"/>
</dbReference>
<sequence length="134" mass="14883">MHIALIAHDEKKDLMVGFATAYKHLLEPHQLYATGTTGLRIIEATGLTVHRFKSGPLGGDQQIGARISENKMDLVIFLRDPLTAQPHEPDVTALIRLCDVYEIPLATNIGTAEILIRGLGAGFLDWRDLRRNDE</sequence>
<evidence type="ECO:0000255" key="1">
    <source>
        <dbReference type="HAMAP-Rule" id="MF_00549"/>
    </source>
</evidence>
<proteinExistence type="inferred from homology"/>
<comment type="function">
    <text evidence="1">Catalyzes the formation of methylglyoxal from dihydroxyacetone phosphate.</text>
</comment>
<comment type="catalytic activity">
    <reaction evidence="1">
        <text>dihydroxyacetone phosphate = methylglyoxal + phosphate</text>
        <dbReference type="Rhea" id="RHEA:17937"/>
        <dbReference type="ChEBI" id="CHEBI:17158"/>
        <dbReference type="ChEBI" id="CHEBI:43474"/>
        <dbReference type="ChEBI" id="CHEBI:57642"/>
        <dbReference type="EC" id="4.2.3.3"/>
    </reaction>
</comment>
<comment type="similarity">
    <text evidence="1">Belongs to the methylglyoxal synthase family.</text>
</comment>
<organism>
    <name type="scientific">Listeria monocytogenes serovar 1/2a (strain ATCC BAA-679 / EGD-e)</name>
    <dbReference type="NCBI Taxonomy" id="169963"/>
    <lineage>
        <taxon>Bacteria</taxon>
        <taxon>Bacillati</taxon>
        <taxon>Bacillota</taxon>
        <taxon>Bacilli</taxon>
        <taxon>Bacillales</taxon>
        <taxon>Listeriaceae</taxon>
        <taxon>Listeria</taxon>
    </lineage>
</organism>
<keyword id="KW-0456">Lyase</keyword>
<keyword id="KW-1185">Reference proteome</keyword>